<sequence length="223" mass="24598">MKTIQIAIDGPASSGKSTVAKIIAKDFGFTYLDTGAMYRAATYMALKNQLGVEEVEALLALLDQHPISFGRSETGDQLVFVGDVDITHPIRENEVTNHVSAIAAIPEVREKLVSLQQEIAQQGGIVMDGRDIGTVVLPQAELKIFLVASVDERAERRYKENIAKGIETDLETLKKEIAARDYKDSHRETSPLKQAEDAVYLDTTGLNIQEVVEKIKAEAEKRM</sequence>
<name>KCY_STRR6</name>
<gene>
    <name evidence="1" type="primary">cmk</name>
    <name type="ordered locus">spr1456</name>
</gene>
<reference key="1">
    <citation type="journal article" date="2001" name="J. Bacteriol.">
        <title>Genome of the bacterium Streptococcus pneumoniae strain R6.</title>
        <authorList>
            <person name="Hoskins J."/>
            <person name="Alborn W.E. Jr."/>
            <person name="Arnold J."/>
            <person name="Blaszczak L.C."/>
            <person name="Burgett S."/>
            <person name="DeHoff B.S."/>
            <person name="Estrem S.T."/>
            <person name="Fritz L."/>
            <person name="Fu D.-J."/>
            <person name="Fuller W."/>
            <person name="Geringer C."/>
            <person name="Gilmour R."/>
            <person name="Glass J.S."/>
            <person name="Khoja H."/>
            <person name="Kraft A.R."/>
            <person name="Lagace R.E."/>
            <person name="LeBlanc D.J."/>
            <person name="Lee L.N."/>
            <person name="Lefkowitz E.J."/>
            <person name="Lu J."/>
            <person name="Matsushima P."/>
            <person name="McAhren S.M."/>
            <person name="McHenney M."/>
            <person name="McLeaster K."/>
            <person name="Mundy C.W."/>
            <person name="Nicas T.I."/>
            <person name="Norris F.H."/>
            <person name="O'Gara M."/>
            <person name="Peery R.B."/>
            <person name="Robertson G.T."/>
            <person name="Rockey P."/>
            <person name="Sun P.-M."/>
            <person name="Winkler M.E."/>
            <person name="Yang Y."/>
            <person name="Young-Bellido M."/>
            <person name="Zhao G."/>
            <person name="Zook C.A."/>
            <person name="Baltz R.H."/>
            <person name="Jaskunas S.R."/>
            <person name="Rosteck P.R. Jr."/>
            <person name="Skatrud P.L."/>
            <person name="Glass J.I."/>
        </authorList>
    </citation>
    <scope>NUCLEOTIDE SEQUENCE [LARGE SCALE GENOMIC DNA]</scope>
    <source>
        <strain>ATCC BAA-255 / R6</strain>
    </source>
</reference>
<proteinExistence type="inferred from homology"/>
<evidence type="ECO:0000255" key="1">
    <source>
        <dbReference type="HAMAP-Rule" id="MF_00238"/>
    </source>
</evidence>
<dbReference type="EC" id="2.7.4.25" evidence="1"/>
<dbReference type="EMBL" id="AE007317">
    <property type="protein sequence ID" value="AAL00260.1"/>
    <property type="molecule type" value="Genomic_DNA"/>
</dbReference>
<dbReference type="PIR" id="G98053">
    <property type="entry name" value="G98053"/>
</dbReference>
<dbReference type="RefSeq" id="NP_359049.1">
    <property type="nucleotide sequence ID" value="NC_003098.1"/>
</dbReference>
<dbReference type="RefSeq" id="WP_000849378.1">
    <property type="nucleotide sequence ID" value="NC_003098.1"/>
</dbReference>
<dbReference type="SMR" id="Q8DNY9"/>
<dbReference type="STRING" id="171101.spr1456"/>
<dbReference type="GeneID" id="45653168"/>
<dbReference type="KEGG" id="spr:spr1456"/>
<dbReference type="PATRIC" id="fig|171101.6.peg.1572"/>
<dbReference type="eggNOG" id="COG0283">
    <property type="taxonomic scope" value="Bacteria"/>
</dbReference>
<dbReference type="HOGENOM" id="CLU_079959_0_2_9"/>
<dbReference type="Proteomes" id="UP000000586">
    <property type="component" value="Chromosome"/>
</dbReference>
<dbReference type="GO" id="GO:0005829">
    <property type="term" value="C:cytosol"/>
    <property type="evidence" value="ECO:0000318"/>
    <property type="project" value="GO_Central"/>
</dbReference>
<dbReference type="GO" id="GO:0004127">
    <property type="term" value="F:(d)CMP kinase activity"/>
    <property type="evidence" value="ECO:0000318"/>
    <property type="project" value="GO_Central"/>
</dbReference>
<dbReference type="GO" id="GO:0005524">
    <property type="term" value="F:ATP binding"/>
    <property type="evidence" value="ECO:0007669"/>
    <property type="project" value="UniProtKB-UniRule"/>
</dbReference>
<dbReference type="GO" id="GO:0036430">
    <property type="term" value="F:CMP kinase activity"/>
    <property type="evidence" value="ECO:0007669"/>
    <property type="project" value="RHEA"/>
</dbReference>
<dbReference type="GO" id="GO:0036431">
    <property type="term" value="F:dCMP kinase activity"/>
    <property type="evidence" value="ECO:0007669"/>
    <property type="project" value="RHEA"/>
</dbReference>
<dbReference type="GO" id="GO:0015949">
    <property type="term" value="P:nucleobase-containing small molecule interconversion"/>
    <property type="evidence" value="ECO:0000318"/>
    <property type="project" value="GO_Central"/>
</dbReference>
<dbReference type="GO" id="GO:0006220">
    <property type="term" value="P:pyrimidine nucleotide metabolic process"/>
    <property type="evidence" value="ECO:0007669"/>
    <property type="project" value="UniProtKB-UniRule"/>
</dbReference>
<dbReference type="CDD" id="cd02020">
    <property type="entry name" value="CMPK"/>
    <property type="match status" value="1"/>
</dbReference>
<dbReference type="FunFam" id="3.40.50.300:FF:000484">
    <property type="entry name" value="Cytidylate kinase"/>
    <property type="match status" value="1"/>
</dbReference>
<dbReference type="Gene3D" id="3.40.50.300">
    <property type="entry name" value="P-loop containing nucleotide triphosphate hydrolases"/>
    <property type="match status" value="1"/>
</dbReference>
<dbReference type="HAMAP" id="MF_00238">
    <property type="entry name" value="Cytidyl_kinase_type1"/>
    <property type="match status" value="1"/>
</dbReference>
<dbReference type="InterPro" id="IPR003136">
    <property type="entry name" value="Cytidylate_kin"/>
</dbReference>
<dbReference type="InterPro" id="IPR011994">
    <property type="entry name" value="Cytidylate_kinase_dom"/>
</dbReference>
<dbReference type="InterPro" id="IPR027417">
    <property type="entry name" value="P-loop_NTPase"/>
</dbReference>
<dbReference type="NCBIfam" id="TIGR00017">
    <property type="entry name" value="cmk"/>
    <property type="match status" value="1"/>
</dbReference>
<dbReference type="PANTHER" id="PTHR21299:SF2">
    <property type="entry name" value="CYTIDYLATE KINASE"/>
    <property type="match status" value="1"/>
</dbReference>
<dbReference type="PANTHER" id="PTHR21299">
    <property type="entry name" value="CYTIDYLATE KINASE/PANTOATE-BETA-ALANINE LIGASE"/>
    <property type="match status" value="1"/>
</dbReference>
<dbReference type="Pfam" id="PF02224">
    <property type="entry name" value="Cytidylate_kin"/>
    <property type="match status" value="1"/>
</dbReference>
<dbReference type="SUPFAM" id="SSF52540">
    <property type="entry name" value="P-loop containing nucleoside triphosphate hydrolases"/>
    <property type="match status" value="1"/>
</dbReference>
<protein>
    <recommendedName>
        <fullName evidence="1">Cytidylate kinase</fullName>
        <shortName evidence="1">CK</shortName>
        <ecNumber evidence="1">2.7.4.25</ecNumber>
    </recommendedName>
    <alternativeName>
        <fullName evidence="1">Cytidine monophosphate kinase</fullName>
        <shortName evidence="1">CMP kinase</shortName>
    </alternativeName>
</protein>
<accession>Q8DNY9</accession>
<feature type="chain" id="PRO_0000131986" description="Cytidylate kinase">
    <location>
        <begin position="1"/>
        <end position="223"/>
    </location>
</feature>
<feature type="binding site" evidence="1">
    <location>
        <begin position="10"/>
        <end position="18"/>
    </location>
    <ligand>
        <name>ATP</name>
        <dbReference type="ChEBI" id="CHEBI:30616"/>
    </ligand>
</feature>
<keyword id="KW-0067">ATP-binding</keyword>
<keyword id="KW-0963">Cytoplasm</keyword>
<keyword id="KW-0418">Kinase</keyword>
<keyword id="KW-0547">Nucleotide-binding</keyword>
<keyword id="KW-1185">Reference proteome</keyword>
<keyword id="KW-0808">Transferase</keyword>
<organism>
    <name type="scientific">Streptococcus pneumoniae (strain ATCC BAA-255 / R6)</name>
    <dbReference type="NCBI Taxonomy" id="171101"/>
    <lineage>
        <taxon>Bacteria</taxon>
        <taxon>Bacillati</taxon>
        <taxon>Bacillota</taxon>
        <taxon>Bacilli</taxon>
        <taxon>Lactobacillales</taxon>
        <taxon>Streptococcaceae</taxon>
        <taxon>Streptococcus</taxon>
    </lineage>
</organism>
<comment type="catalytic activity">
    <reaction evidence="1">
        <text>CMP + ATP = CDP + ADP</text>
        <dbReference type="Rhea" id="RHEA:11600"/>
        <dbReference type="ChEBI" id="CHEBI:30616"/>
        <dbReference type="ChEBI" id="CHEBI:58069"/>
        <dbReference type="ChEBI" id="CHEBI:60377"/>
        <dbReference type="ChEBI" id="CHEBI:456216"/>
        <dbReference type="EC" id="2.7.4.25"/>
    </reaction>
</comment>
<comment type="catalytic activity">
    <reaction evidence="1">
        <text>dCMP + ATP = dCDP + ADP</text>
        <dbReference type="Rhea" id="RHEA:25094"/>
        <dbReference type="ChEBI" id="CHEBI:30616"/>
        <dbReference type="ChEBI" id="CHEBI:57566"/>
        <dbReference type="ChEBI" id="CHEBI:58593"/>
        <dbReference type="ChEBI" id="CHEBI:456216"/>
        <dbReference type="EC" id="2.7.4.25"/>
    </reaction>
</comment>
<comment type="subcellular location">
    <subcellularLocation>
        <location evidence="1">Cytoplasm</location>
    </subcellularLocation>
</comment>
<comment type="similarity">
    <text evidence="1">Belongs to the cytidylate kinase family. Type 1 subfamily.</text>
</comment>